<keyword id="KW-1003">Cell membrane</keyword>
<keyword id="KW-0342">GTP-binding</keyword>
<keyword id="KW-0378">Hydrolase</keyword>
<keyword id="KW-0472">Membrane</keyword>
<keyword id="KW-0547">Nucleotide-binding</keyword>
<keyword id="KW-0648">Protein biosynthesis</keyword>
<keyword id="KW-1185">Reference proteome</keyword>
<feature type="chain" id="PRO_0000176286" description="Elongation factor 4 1">
    <location>
        <begin position="1"/>
        <end position="611"/>
    </location>
</feature>
<feature type="domain" description="tr-type G">
    <location>
        <begin position="11"/>
        <end position="193"/>
    </location>
</feature>
<feature type="binding site" evidence="1">
    <location>
        <begin position="23"/>
        <end position="28"/>
    </location>
    <ligand>
        <name>GTP</name>
        <dbReference type="ChEBI" id="CHEBI:37565"/>
    </ligand>
</feature>
<feature type="binding site" evidence="1">
    <location>
        <begin position="140"/>
        <end position="143"/>
    </location>
    <ligand>
        <name>GTP</name>
        <dbReference type="ChEBI" id="CHEBI:37565"/>
    </ligand>
</feature>
<dbReference type="EC" id="3.6.5.n1" evidence="1"/>
<dbReference type="EMBL" id="AL935263">
    <property type="protein sequence ID" value="CCC79263.1"/>
    <property type="molecule type" value="Genomic_DNA"/>
</dbReference>
<dbReference type="RefSeq" id="YP_004889777.1">
    <property type="nucleotide sequence ID" value="NC_004567.2"/>
</dbReference>
<dbReference type="SMR" id="Q88VN0"/>
<dbReference type="STRING" id="220668.lp_2015"/>
<dbReference type="EnsemblBacteria" id="CCC79263">
    <property type="protein sequence ID" value="CCC79263"/>
    <property type="gene ID" value="lp_2015"/>
</dbReference>
<dbReference type="KEGG" id="lpl:lp_2015"/>
<dbReference type="PATRIC" id="fig|220668.9.peg.1702"/>
<dbReference type="eggNOG" id="COG0481">
    <property type="taxonomic scope" value="Bacteria"/>
</dbReference>
<dbReference type="HOGENOM" id="CLU_009995_3_3_9"/>
<dbReference type="OrthoDB" id="9801591at2"/>
<dbReference type="PhylomeDB" id="Q88VN0"/>
<dbReference type="Proteomes" id="UP000000432">
    <property type="component" value="Chromosome"/>
</dbReference>
<dbReference type="GO" id="GO:0005886">
    <property type="term" value="C:plasma membrane"/>
    <property type="evidence" value="ECO:0007669"/>
    <property type="project" value="UniProtKB-SubCell"/>
</dbReference>
<dbReference type="GO" id="GO:0005525">
    <property type="term" value="F:GTP binding"/>
    <property type="evidence" value="ECO:0007669"/>
    <property type="project" value="UniProtKB-UniRule"/>
</dbReference>
<dbReference type="GO" id="GO:0003924">
    <property type="term" value="F:GTPase activity"/>
    <property type="evidence" value="ECO:0007669"/>
    <property type="project" value="UniProtKB-UniRule"/>
</dbReference>
<dbReference type="GO" id="GO:0043022">
    <property type="term" value="F:ribosome binding"/>
    <property type="evidence" value="ECO:0007669"/>
    <property type="project" value="UniProtKB-UniRule"/>
</dbReference>
<dbReference type="GO" id="GO:0003746">
    <property type="term" value="F:translation elongation factor activity"/>
    <property type="evidence" value="ECO:0007669"/>
    <property type="project" value="UniProtKB-UniRule"/>
</dbReference>
<dbReference type="GO" id="GO:0045727">
    <property type="term" value="P:positive regulation of translation"/>
    <property type="evidence" value="ECO:0007669"/>
    <property type="project" value="UniProtKB-UniRule"/>
</dbReference>
<dbReference type="CDD" id="cd03699">
    <property type="entry name" value="EF4_II"/>
    <property type="match status" value="1"/>
</dbReference>
<dbReference type="CDD" id="cd16260">
    <property type="entry name" value="EF4_III"/>
    <property type="match status" value="1"/>
</dbReference>
<dbReference type="CDD" id="cd01890">
    <property type="entry name" value="LepA"/>
    <property type="match status" value="1"/>
</dbReference>
<dbReference type="CDD" id="cd03709">
    <property type="entry name" value="lepA_C"/>
    <property type="match status" value="1"/>
</dbReference>
<dbReference type="FunFam" id="3.40.50.300:FF:000078">
    <property type="entry name" value="Elongation factor 4"/>
    <property type="match status" value="1"/>
</dbReference>
<dbReference type="FunFam" id="2.40.30.10:FF:000015">
    <property type="entry name" value="Translation factor GUF1, mitochondrial"/>
    <property type="match status" value="1"/>
</dbReference>
<dbReference type="FunFam" id="3.30.70.240:FF:000007">
    <property type="entry name" value="Translation factor GUF1, mitochondrial"/>
    <property type="match status" value="1"/>
</dbReference>
<dbReference type="FunFam" id="3.30.70.2570:FF:000001">
    <property type="entry name" value="Translation factor GUF1, mitochondrial"/>
    <property type="match status" value="1"/>
</dbReference>
<dbReference type="FunFam" id="3.30.70.870:FF:000004">
    <property type="entry name" value="Translation factor GUF1, mitochondrial"/>
    <property type="match status" value="1"/>
</dbReference>
<dbReference type="Gene3D" id="3.30.70.240">
    <property type="match status" value="1"/>
</dbReference>
<dbReference type="Gene3D" id="3.30.70.2570">
    <property type="entry name" value="Elongation factor 4, C-terminal domain"/>
    <property type="match status" value="1"/>
</dbReference>
<dbReference type="Gene3D" id="3.30.70.870">
    <property type="entry name" value="Elongation Factor G (Translational Gtpase), domain 3"/>
    <property type="match status" value="1"/>
</dbReference>
<dbReference type="Gene3D" id="3.40.50.300">
    <property type="entry name" value="P-loop containing nucleotide triphosphate hydrolases"/>
    <property type="match status" value="1"/>
</dbReference>
<dbReference type="Gene3D" id="2.40.30.10">
    <property type="entry name" value="Translation factors"/>
    <property type="match status" value="1"/>
</dbReference>
<dbReference type="HAMAP" id="MF_00071">
    <property type="entry name" value="LepA"/>
    <property type="match status" value="1"/>
</dbReference>
<dbReference type="InterPro" id="IPR006297">
    <property type="entry name" value="EF-4"/>
</dbReference>
<dbReference type="InterPro" id="IPR035647">
    <property type="entry name" value="EFG_III/V"/>
</dbReference>
<dbReference type="InterPro" id="IPR000640">
    <property type="entry name" value="EFG_V-like"/>
</dbReference>
<dbReference type="InterPro" id="IPR004161">
    <property type="entry name" value="EFTu-like_2"/>
</dbReference>
<dbReference type="InterPro" id="IPR031157">
    <property type="entry name" value="G_TR_CS"/>
</dbReference>
<dbReference type="InterPro" id="IPR038363">
    <property type="entry name" value="LepA_C_sf"/>
</dbReference>
<dbReference type="InterPro" id="IPR013842">
    <property type="entry name" value="LepA_CTD"/>
</dbReference>
<dbReference type="InterPro" id="IPR035654">
    <property type="entry name" value="LepA_IV"/>
</dbReference>
<dbReference type="InterPro" id="IPR027417">
    <property type="entry name" value="P-loop_NTPase"/>
</dbReference>
<dbReference type="InterPro" id="IPR005225">
    <property type="entry name" value="Small_GTP-bd"/>
</dbReference>
<dbReference type="InterPro" id="IPR000795">
    <property type="entry name" value="T_Tr_GTP-bd_dom"/>
</dbReference>
<dbReference type="NCBIfam" id="TIGR01393">
    <property type="entry name" value="lepA"/>
    <property type="match status" value="1"/>
</dbReference>
<dbReference type="NCBIfam" id="TIGR00231">
    <property type="entry name" value="small_GTP"/>
    <property type="match status" value="1"/>
</dbReference>
<dbReference type="PANTHER" id="PTHR43512:SF4">
    <property type="entry name" value="TRANSLATION FACTOR GUF1 HOMOLOG, CHLOROPLASTIC"/>
    <property type="match status" value="1"/>
</dbReference>
<dbReference type="PANTHER" id="PTHR43512">
    <property type="entry name" value="TRANSLATION FACTOR GUF1-RELATED"/>
    <property type="match status" value="1"/>
</dbReference>
<dbReference type="Pfam" id="PF00679">
    <property type="entry name" value="EFG_C"/>
    <property type="match status" value="1"/>
</dbReference>
<dbReference type="Pfam" id="PF00009">
    <property type="entry name" value="GTP_EFTU"/>
    <property type="match status" value="1"/>
</dbReference>
<dbReference type="Pfam" id="PF03144">
    <property type="entry name" value="GTP_EFTU_D2"/>
    <property type="match status" value="1"/>
</dbReference>
<dbReference type="Pfam" id="PF06421">
    <property type="entry name" value="LepA_C"/>
    <property type="match status" value="1"/>
</dbReference>
<dbReference type="PRINTS" id="PR00315">
    <property type="entry name" value="ELONGATNFCT"/>
</dbReference>
<dbReference type="SMART" id="SM00838">
    <property type="entry name" value="EFG_C"/>
    <property type="match status" value="1"/>
</dbReference>
<dbReference type="SUPFAM" id="SSF54980">
    <property type="entry name" value="EF-G C-terminal domain-like"/>
    <property type="match status" value="2"/>
</dbReference>
<dbReference type="SUPFAM" id="SSF52540">
    <property type="entry name" value="P-loop containing nucleoside triphosphate hydrolases"/>
    <property type="match status" value="1"/>
</dbReference>
<dbReference type="PROSITE" id="PS00301">
    <property type="entry name" value="G_TR_1"/>
    <property type="match status" value="1"/>
</dbReference>
<dbReference type="PROSITE" id="PS51722">
    <property type="entry name" value="G_TR_2"/>
    <property type="match status" value="1"/>
</dbReference>
<gene>
    <name evidence="1" type="primary">lepA1</name>
    <name type="ordered locus">lp_2015</name>
</gene>
<evidence type="ECO:0000255" key="1">
    <source>
        <dbReference type="HAMAP-Rule" id="MF_00071"/>
    </source>
</evidence>
<name>LEPA1_LACPL</name>
<proteinExistence type="inferred from homology"/>
<protein>
    <recommendedName>
        <fullName evidence="1">Elongation factor 4 1</fullName>
        <shortName evidence="1">EF-4 1</shortName>
        <ecNumber evidence="1">3.6.5.n1</ecNumber>
    </recommendedName>
    <alternativeName>
        <fullName evidence="1">Ribosomal back-translocase LepA 1</fullName>
    </alternativeName>
</protein>
<organism>
    <name type="scientific">Lactiplantibacillus plantarum (strain ATCC BAA-793 / NCIMB 8826 / WCFS1)</name>
    <name type="common">Lactobacillus plantarum</name>
    <dbReference type="NCBI Taxonomy" id="220668"/>
    <lineage>
        <taxon>Bacteria</taxon>
        <taxon>Bacillati</taxon>
        <taxon>Bacillota</taxon>
        <taxon>Bacilli</taxon>
        <taxon>Lactobacillales</taxon>
        <taxon>Lactobacillaceae</taxon>
        <taxon>Lactiplantibacillus</taxon>
    </lineage>
</organism>
<reference key="1">
    <citation type="journal article" date="2003" name="Proc. Natl. Acad. Sci. U.S.A.">
        <title>Complete genome sequence of Lactobacillus plantarum WCFS1.</title>
        <authorList>
            <person name="Kleerebezem M."/>
            <person name="Boekhorst J."/>
            <person name="van Kranenburg R."/>
            <person name="Molenaar D."/>
            <person name="Kuipers O.P."/>
            <person name="Leer R."/>
            <person name="Tarchini R."/>
            <person name="Peters S.A."/>
            <person name="Sandbrink H.M."/>
            <person name="Fiers M.W.E.J."/>
            <person name="Stiekema W."/>
            <person name="Klein Lankhorst R.M."/>
            <person name="Bron P.A."/>
            <person name="Hoffer S.M."/>
            <person name="Nierop Groot M.N."/>
            <person name="Kerkhoven R."/>
            <person name="De Vries M."/>
            <person name="Ursing B."/>
            <person name="De Vos W.M."/>
            <person name="Siezen R.J."/>
        </authorList>
    </citation>
    <scope>NUCLEOTIDE SEQUENCE [LARGE SCALE GENOMIC DNA]</scope>
    <source>
        <strain>ATCC BAA-793 / NCIMB 8826 / WCFS1</strain>
    </source>
</reference>
<reference key="2">
    <citation type="journal article" date="2012" name="J. Bacteriol.">
        <title>Complete resequencing and reannotation of the Lactobacillus plantarum WCFS1 genome.</title>
        <authorList>
            <person name="Siezen R.J."/>
            <person name="Francke C."/>
            <person name="Renckens B."/>
            <person name="Boekhorst J."/>
            <person name="Wels M."/>
            <person name="Kleerebezem M."/>
            <person name="van Hijum S.A."/>
        </authorList>
    </citation>
    <scope>NUCLEOTIDE SEQUENCE [LARGE SCALE GENOMIC DNA]</scope>
    <scope>GENOME REANNOTATION</scope>
    <source>
        <strain>ATCC BAA-793 / NCIMB 8826 / WCFS1</strain>
    </source>
</reference>
<sequence length="611" mass="68345">MDKATMQDRQQHIRNFSIVAHIDHGKSTLADRILELTDTISKREMQDQVLDSMDLERERGITIKLNAVELHYQAKDGETYIFHLIDTPGHVDFTYEVSRSLAACEGAVLVVDAAQGVEAQTLANVYLAIDDDLEIVPVINKIDLPSAEPEKVRKEIEDDIGIDAEDAVLASAKAGIGIEDLLEQIVHKIPAPQGDLDAPLKALVFDSVYDDYRGVVLSVRIHEGIVRPGDRIRLMNSGSEYEVTEVGVNSPKPLARDYLMAGDVGYITASIKDIQDTRVGDTVTNAKNPAEKPLAGYREMNPMVYAGIYPTDNAKFTDLREALEKLKLNDAALEFEAESSQALGFGFRCGFLGLLHMDVIQERLEREFNLELITTAPSVTYHVRMTDGTEKKVENPAEMPEASAIKEIREPYVKAQIMVPNDYVGAVMELAQRKRGEFDTMEYLDSNRVNVVYHIPLSEIIFDFFDKLKSNTRGYASLDYDLDGYRASDLVKIDILLNGDQVDALSFIAHRDFAPARGREIAAKLKTIIPRQNFEIPVQATIGSKVIARTNIKAYRKDVTAHLYGGDRTRRMKLLEKQKAGKKRMKAVGKVEIPQEAFMAVLKTDEDEKPN</sequence>
<comment type="function">
    <text evidence="1">Required for accurate and efficient protein synthesis under certain stress conditions. May act as a fidelity factor of the translation reaction, by catalyzing a one-codon backward translocation of tRNAs on improperly translocated ribosomes. Back-translocation proceeds from a post-translocation (POST) complex to a pre-translocation (PRE) complex, thus giving elongation factor G a second chance to translocate the tRNAs correctly. Binds to ribosomes in a GTP-dependent manner.</text>
</comment>
<comment type="catalytic activity">
    <reaction evidence="1">
        <text>GTP + H2O = GDP + phosphate + H(+)</text>
        <dbReference type="Rhea" id="RHEA:19669"/>
        <dbReference type="ChEBI" id="CHEBI:15377"/>
        <dbReference type="ChEBI" id="CHEBI:15378"/>
        <dbReference type="ChEBI" id="CHEBI:37565"/>
        <dbReference type="ChEBI" id="CHEBI:43474"/>
        <dbReference type="ChEBI" id="CHEBI:58189"/>
        <dbReference type="EC" id="3.6.5.n1"/>
    </reaction>
</comment>
<comment type="subcellular location">
    <subcellularLocation>
        <location evidence="1">Cell membrane</location>
        <topology evidence="1">Peripheral membrane protein</topology>
        <orientation evidence="1">Cytoplasmic side</orientation>
    </subcellularLocation>
</comment>
<comment type="similarity">
    <text evidence="1">Belongs to the TRAFAC class translation factor GTPase superfamily. Classic translation factor GTPase family. LepA subfamily.</text>
</comment>
<accession>Q88VN0</accession>
<accession>F9UPX4</accession>